<keyword id="KW-0046">Antibiotic resistance</keyword>
<keyword id="KW-1003">Cell membrane</keyword>
<keyword id="KW-0472">Membrane</keyword>
<keyword id="KW-0812">Transmembrane</keyword>
<keyword id="KW-1133">Transmembrane helix</keyword>
<keyword id="KW-0813">Transport</keyword>
<organism>
    <name type="scientific">Staphylococcus aureus (strain Newman)</name>
    <dbReference type="NCBI Taxonomy" id="426430"/>
    <lineage>
        <taxon>Bacteria</taxon>
        <taxon>Bacillati</taxon>
        <taxon>Bacillota</taxon>
        <taxon>Bacilli</taxon>
        <taxon>Bacillales</taxon>
        <taxon>Staphylococcaceae</taxon>
        <taxon>Staphylococcus</taxon>
    </lineage>
</organism>
<comment type="function">
    <text evidence="1">Multidrug efflux pump that acts independently of NorA and is one of the factors that confers resistance against diverse quinolones and chemical compounds.</text>
</comment>
<comment type="subcellular location">
    <subcellularLocation>
        <location evidence="4">Cell membrane</location>
        <topology evidence="4">Multi-pass membrane protein</topology>
    </subcellularLocation>
</comment>
<comment type="induction">
    <text evidence="3">Up-regulated by MgrA.</text>
</comment>
<comment type="similarity">
    <text evidence="4">Belongs to the major facilitator superfamily. TCR/Tet family.</text>
</comment>
<feature type="chain" id="PRO_0000361965" description="Quinolone resistance protein NorB">
    <location>
        <begin position="1"/>
        <end position="463"/>
    </location>
</feature>
<feature type="transmembrane region" description="Helical" evidence="2">
    <location>
        <begin position="17"/>
        <end position="37"/>
    </location>
</feature>
<feature type="transmembrane region" description="Helical" evidence="2">
    <location>
        <begin position="53"/>
        <end position="73"/>
    </location>
</feature>
<feature type="transmembrane region" description="Helical" evidence="2">
    <location>
        <begin position="86"/>
        <end position="106"/>
    </location>
</feature>
<feature type="transmembrane region" description="Helical" evidence="2">
    <location>
        <begin position="107"/>
        <end position="127"/>
    </location>
</feature>
<feature type="transmembrane region" description="Helical" evidence="2">
    <location>
        <begin position="142"/>
        <end position="162"/>
    </location>
</feature>
<feature type="transmembrane region" description="Helical" evidence="2">
    <location>
        <begin position="165"/>
        <end position="185"/>
    </location>
</feature>
<feature type="transmembrane region" description="Helical" evidence="2">
    <location>
        <begin position="201"/>
        <end position="221"/>
    </location>
</feature>
<feature type="transmembrane region" description="Helical" evidence="2">
    <location>
        <begin position="230"/>
        <end position="250"/>
    </location>
</feature>
<feature type="transmembrane region" description="Helical" evidence="2">
    <location>
        <begin position="273"/>
        <end position="293"/>
    </location>
</feature>
<feature type="transmembrane region" description="Helical" evidence="2">
    <location>
        <begin position="299"/>
        <end position="319"/>
    </location>
</feature>
<feature type="transmembrane region" description="Helical" evidence="2">
    <location>
        <begin position="334"/>
        <end position="354"/>
    </location>
</feature>
<feature type="transmembrane region" description="Helical" evidence="2">
    <location>
        <begin position="357"/>
        <end position="377"/>
    </location>
</feature>
<feature type="transmembrane region" description="Helical" evidence="2">
    <location>
        <begin position="403"/>
        <end position="423"/>
    </location>
</feature>
<feature type="transmembrane region" description="Helical" evidence="2">
    <location>
        <begin position="435"/>
        <end position="455"/>
    </location>
</feature>
<evidence type="ECO:0000250" key="1"/>
<evidence type="ECO:0000255" key="2"/>
<evidence type="ECO:0000269" key="3">
    <source>
    </source>
</evidence>
<evidence type="ECO:0000305" key="4"/>
<accession>A6QGY6</accession>
<protein>
    <recommendedName>
        <fullName>Quinolone resistance protein NorB</fullName>
    </recommendedName>
</protein>
<proteinExistence type="evidence at transcript level"/>
<dbReference type="EMBL" id="AP009351">
    <property type="protein sequence ID" value="BAF67618.1"/>
    <property type="molecule type" value="Genomic_DNA"/>
</dbReference>
<dbReference type="RefSeq" id="WP_000414685.1">
    <property type="nucleotide sequence ID" value="NZ_JBBIAE010000001.1"/>
</dbReference>
<dbReference type="SMR" id="A6QGY6"/>
<dbReference type="KEGG" id="sae:NWMN_1346"/>
<dbReference type="HOGENOM" id="CLU_000960_28_3_9"/>
<dbReference type="Proteomes" id="UP000006386">
    <property type="component" value="Chromosome"/>
</dbReference>
<dbReference type="GO" id="GO:0005886">
    <property type="term" value="C:plasma membrane"/>
    <property type="evidence" value="ECO:0007669"/>
    <property type="project" value="UniProtKB-SubCell"/>
</dbReference>
<dbReference type="GO" id="GO:0022857">
    <property type="term" value="F:transmembrane transporter activity"/>
    <property type="evidence" value="ECO:0007669"/>
    <property type="project" value="InterPro"/>
</dbReference>
<dbReference type="GO" id="GO:0046677">
    <property type="term" value="P:response to antibiotic"/>
    <property type="evidence" value="ECO:0007669"/>
    <property type="project" value="UniProtKB-KW"/>
</dbReference>
<dbReference type="CDD" id="cd17321">
    <property type="entry name" value="MFS_MMR_MDR_like"/>
    <property type="match status" value="1"/>
</dbReference>
<dbReference type="FunFam" id="1.20.1250.20:FF:000252">
    <property type="entry name" value="Quinolone resistance protein NorB"/>
    <property type="match status" value="1"/>
</dbReference>
<dbReference type="FunFam" id="1.20.1720.10:FF:000015">
    <property type="entry name" value="Quinolone resistance protein NorB"/>
    <property type="match status" value="1"/>
</dbReference>
<dbReference type="Gene3D" id="1.20.1250.20">
    <property type="entry name" value="MFS general substrate transporter like domains"/>
    <property type="match status" value="1"/>
</dbReference>
<dbReference type="Gene3D" id="1.20.1720.10">
    <property type="entry name" value="Multidrug resistance protein D"/>
    <property type="match status" value="1"/>
</dbReference>
<dbReference type="InterPro" id="IPR011701">
    <property type="entry name" value="MFS"/>
</dbReference>
<dbReference type="InterPro" id="IPR020846">
    <property type="entry name" value="MFS_dom"/>
</dbReference>
<dbReference type="InterPro" id="IPR036259">
    <property type="entry name" value="MFS_trans_sf"/>
</dbReference>
<dbReference type="PANTHER" id="PTHR42718">
    <property type="entry name" value="MAJOR FACILITATOR SUPERFAMILY MULTIDRUG TRANSPORTER MFSC"/>
    <property type="match status" value="1"/>
</dbReference>
<dbReference type="PANTHER" id="PTHR42718:SF9">
    <property type="entry name" value="MAJOR FACILITATOR SUPERFAMILY MULTIDRUG TRANSPORTER MFSC"/>
    <property type="match status" value="1"/>
</dbReference>
<dbReference type="Pfam" id="PF07690">
    <property type="entry name" value="MFS_1"/>
    <property type="match status" value="1"/>
</dbReference>
<dbReference type="SUPFAM" id="SSF103473">
    <property type="entry name" value="MFS general substrate transporter"/>
    <property type="match status" value="1"/>
</dbReference>
<dbReference type="PROSITE" id="PS50850">
    <property type="entry name" value="MFS"/>
    <property type="match status" value="1"/>
</dbReference>
<reference key="1">
    <citation type="journal article" date="2008" name="J. Bacteriol.">
        <title>Genome sequence of Staphylococcus aureus strain Newman and comparative analysis of staphylococcal genomes: polymorphism and evolution of two major pathogenicity islands.</title>
        <authorList>
            <person name="Baba T."/>
            <person name="Bae T."/>
            <person name="Schneewind O."/>
            <person name="Takeuchi F."/>
            <person name="Hiramatsu K."/>
        </authorList>
    </citation>
    <scope>NUCLEOTIDE SEQUENCE [LARGE SCALE GENOMIC DNA]</scope>
    <source>
        <strain>Newman</strain>
    </source>
</reference>
<reference key="2">
    <citation type="journal article" date="2006" name="J. Bacteriol.">
        <title>Transcription profiling of the mgrA regulon in Staphylococcus aureus.</title>
        <authorList>
            <person name="Luong T.T."/>
            <person name="Dunman P.M."/>
            <person name="Murphy E."/>
            <person name="Projan S.J."/>
            <person name="Lee C.Y."/>
        </authorList>
    </citation>
    <scope>INDUCTION BY MGRA</scope>
</reference>
<sequence length="463" mass="49293">MEKPSREAFEGNNKLLIGIVLSVITFWLFAQSLVNVVPILEDSFNTDIGTVNIAVSITALFSGMFVVGAGGLADKYGRIKLTNIGIILNILGSLLIIISNIPLLLIIGRLIQGLSAACIMPATLSIIKSYYIGKDRQRALSYWSIGSWGGSGVCSFFGGAVATLLGWRWIFILSIIISLIALFLIKGTPETKSKSISLNKFDIKGLVLLVIMLLSLNILITKGSELGVTSLLFITLLAIAIGSFSLFIVLEKRATNPLIDFKLFKNKAYTGATASNFLLNGVAGTLIVANTFVQRGLGYSSLQAGSLSITYLVMVLIMIRVGEKLLQTLGCKKPMLIGTGVLIVGECLISLTFLPEIFYVICCIIGYLFFGLGLGIYATPSTDTAIANAPLEKVGVAAGIYKMASALGGAFGVALSGAVYAIVSNMTNIYTGAMIALWLNAGMGILSFVIILLLVPKQNDTQL</sequence>
<gene>
    <name type="primary">norB</name>
    <name type="ordered locus">NWMN_1346</name>
</gene>
<name>NORB_STAAE</name>